<evidence type="ECO:0000250" key="1"/>
<evidence type="ECO:0000250" key="2">
    <source>
        <dbReference type="UniProtKB" id="P10586"/>
    </source>
</evidence>
<evidence type="ECO:0000255" key="3"/>
<evidence type="ECO:0000255" key="4">
    <source>
        <dbReference type="PROSITE-ProRule" id="PRU00114"/>
    </source>
</evidence>
<evidence type="ECO:0000255" key="5">
    <source>
        <dbReference type="PROSITE-ProRule" id="PRU00160"/>
    </source>
</evidence>
<evidence type="ECO:0000255" key="6">
    <source>
        <dbReference type="PROSITE-ProRule" id="PRU00316"/>
    </source>
</evidence>
<evidence type="ECO:0000255" key="7">
    <source>
        <dbReference type="PROSITE-ProRule" id="PRU10044"/>
    </source>
</evidence>
<evidence type="ECO:0000256" key="8">
    <source>
        <dbReference type="SAM" id="MobiDB-lite"/>
    </source>
</evidence>
<evidence type="ECO:0000305" key="9"/>
<organism>
    <name type="scientific">Bos taurus</name>
    <name type="common">Bovine</name>
    <dbReference type="NCBI Taxonomy" id="9913"/>
    <lineage>
        <taxon>Eukaryota</taxon>
        <taxon>Metazoa</taxon>
        <taxon>Chordata</taxon>
        <taxon>Craniata</taxon>
        <taxon>Vertebrata</taxon>
        <taxon>Euteleostomi</taxon>
        <taxon>Mammalia</taxon>
        <taxon>Eutheria</taxon>
        <taxon>Laurasiatheria</taxon>
        <taxon>Artiodactyla</taxon>
        <taxon>Ruminantia</taxon>
        <taxon>Pecora</taxon>
        <taxon>Bovidae</taxon>
        <taxon>Bovinae</taxon>
        <taxon>Bos</taxon>
    </lineage>
</organism>
<comment type="function">
    <text evidence="1">Possible cell adhesion receptor. It possesses an intrinsic protein tyrosine phosphatase activity (PTPase) and dephosphorylates EPHA2 regulating its activity (By similarity).</text>
</comment>
<comment type="function">
    <text evidence="1">The first PTPase domain has enzymatic activity, while the second one seems to affect the substrate specificity of the first one.</text>
</comment>
<comment type="catalytic activity">
    <reaction evidence="7">
        <text>O-phospho-L-tyrosyl-[protein] + H2O = L-tyrosyl-[protein] + phosphate</text>
        <dbReference type="Rhea" id="RHEA:10684"/>
        <dbReference type="Rhea" id="RHEA-COMP:10136"/>
        <dbReference type="Rhea" id="RHEA-COMP:20101"/>
        <dbReference type="ChEBI" id="CHEBI:15377"/>
        <dbReference type="ChEBI" id="CHEBI:43474"/>
        <dbReference type="ChEBI" id="CHEBI:46858"/>
        <dbReference type="ChEBI" id="CHEBI:61978"/>
        <dbReference type="EC" id="3.1.3.48"/>
    </reaction>
</comment>
<comment type="subunit">
    <text evidence="1">Interacts with GRIP1. Interacts with PPFIA1, PPFIA2 and PPFIA3. Interacts with INSR.</text>
</comment>
<comment type="subcellular location">
    <subcellularLocation>
        <location>Membrane</location>
        <topology>Single-pass type I membrane protein</topology>
    </subcellularLocation>
</comment>
<comment type="similarity">
    <text evidence="9">Belongs to the protein-tyrosine phosphatase family. Receptor class 2A subfamily.</text>
</comment>
<gene>
    <name type="primary">PTPRF</name>
</gene>
<reference key="1">
    <citation type="submission" date="2007-07" db="EMBL/GenBank/DDBJ databases">
        <authorList>
            <consortium name="NIH - Mammalian Gene Collection (MGC) project"/>
        </authorList>
    </citation>
    <scope>NUCLEOTIDE SEQUENCE [LARGE SCALE MRNA]</scope>
    <source>
        <strain>Hereford</strain>
        <tissue>Fetal skin</tissue>
    </source>
</reference>
<sequence>MTPEPAPGRTMVPLVPALVMLGLVAGAHGDSKPVFVKVPEDQTGLSGGVASFVCQATGEPKPRITWMKKGKKVSSQRFEVIEFDDGAGSVLRIQPLRVQRDEAIYECTATNSLGEINTSAKLSVLEEEQLPLGFPSIDMGPQLKVVEKARTATMLCAAGGNPDPEISWFKDFLPVDPAASNGRIKQLRSGALQIESSEESDQGKYECVATNSAGTRYSAPANLYVRVRRVAPRFSIPPSSQEVMPGGSVNLTCVAVGAPMPYVKWMMGAEELTKEDEMPVGRNVLELSNVVRSANYTCVAISSLGMIEATAQVTVKALPKPPIDLVVTETTATSVTLTWDSGNSEPVSYYGIQYRPAGAEGPFQEVDGVATTRYSIGGLSPFSEYAFRVLAVNSIGRGPPSEAVRARTGEQAPSSPPRRVQARMLSASTMLVQWEPPEEPNGLVRGYRVYYTPDSRRPLSAWHKHNTDAGLLTTVGSLLPGITYSLRVLAFTAVGDGPPSPTIQVKTQQGVPAQPADFQAEVDSDTRIQLSWLLPPQERIVKYELVYWAAEDEGQQHKVTFDPTSSYTVEDLKPDTLYRFQLAARSELGVGVFTPTIEARTAQSTPSAPPQKVTCVSVGSTTVRVSWVPPPADSRNGVITQYSVAYEAVDGEDRGRHVVDGIGREHSSWDLVGLEKWTEYRVWVRAHTDVGPGPESSPVLVRTDEDVPSGPPRKVEVEPLNSTAVRVSWKLPVPSKQHGQIRGYQVTYVRLENGEPRGAPIIQDVMLAEAQETTISGLTPETTYSITVAAYTTKGDGARSKPKIVTTTGAVPGRPTMMVSTTAMNTALLQWHPPKELPGELLGYRLQYRRADEARPSTIDFGKDDQHFTVTGLHKGATYIFRLTAKNRAGLGEEFEKEITTPEDVPSGFPQNLRVIGLTTSTTELIWDPPVLAERNGRITNYTVVYRDINSQQELQNVTADTHLTLSGLKPDTTYDIKVRARTSKGAGPLSPSIQSRTMPVEQVFAKNFRVEAAMKTSVLLSWEVPDSYKSAVPFRILYNGQSVEVDGHSMRKLIADLQPNTEYSFVLMNRGSSAGGLQHLVSIRTAPDLLPHKPLPASAYIEDGRFTLTMPRVQEPALVRWFYIMVVPIDRMGGSMLAPQWSTPEELELDELLEAIEQGGGERLRRRRQTERLKPYVAAQVDVLPETFTLGDKKNYQGFYNRPLSPDLSYQCFVLASLKEPVDQKRYACSPYSDEIVVQVTPAQQQEEPELLWVTGPVLAVILIVLIVIAILLFKRKRTHSPSSKDEQSIGLKDSLLAHSSDPVEMRRLNYQTPGMRDHPPIPITDLADNIERLKANDGLKFSQEYESIDPGQQFTWENSNLEVNKPKNRYANVIAYDHSRVILTSIDGVPGSDYINANYIDGYRKQNAYIATQGPLPETMGDFWRMVWEQRTATVVMMTRLEEKSRVKCDQYWPARGTETYGLIQVTLLDTVELATYTVRTFALYKSGSSEKRELRQFQFMAWPDHGVPEYPTPILAFLRRVKACNPLDAGPMVVHCSAGVGRTGCFIVIDAMLERMKHEKTVDIYGHVTCMRAQRNYMVQTEDQYVFIHEALLEAAMCGHTEVPARNLYAHIQKLGQVPPGESVTAMELEFKLLANSKAHTSRFISANLPCNKFKNRLVNIMPYELTRVCLQPIRGVEGSDYINASFLDGYRQQKAYIATQGPLAESTEDFWRMLWEHNSTIIVMLTRLREMGREKCHQYWPAERSARYQYFVVDPMAEYNMPQYILREFKVTDARDGQSRTIRQFQFTDWPEQGVPKTGEGFIDFIGQVHKTKEQFGQDGPITVHCSAGVGRTGVFITLSIVLERMRYEGVVDMFQTVKTLRTQRPAMVQTEDQYQLCYRAALEYLGSFDHYAT</sequence>
<feature type="signal peptide" evidence="3">
    <location>
        <begin position="1"/>
        <end position="29"/>
    </location>
</feature>
<feature type="chain" id="PRO_0000370192" description="Receptor-type tyrosine-protein phosphatase F">
    <location>
        <begin position="30"/>
        <end position="1898"/>
    </location>
</feature>
<feature type="topological domain" description="Extracellular" evidence="3">
    <location>
        <begin position="30"/>
        <end position="1254"/>
    </location>
</feature>
<feature type="transmembrane region" description="Helical" evidence="3">
    <location>
        <begin position="1255"/>
        <end position="1275"/>
    </location>
</feature>
<feature type="topological domain" description="Cytoplasmic" evidence="3">
    <location>
        <begin position="1276"/>
        <end position="1898"/>
    </location>
</feature>
<feature type="domain" description="Ig-like C2-type 1">
    <location>
        <begin position="33"/>
        <end position="123"/>
    </location>
</feature>
<feature type="domain" description="Ig-like C2-type 2">
    <location>
        <begin position="135"/>
        <end position="224"/>
    </location>
</feature>
<feature type="domain" description="Ig-like C2-type 3">
    <location>
        <begin position="232"/>
        <end position="314"/>
    </location>
</feature>
<feature type="domain" description="Fibronectin type-III 1" evidence="6">
    <location>
        <begin position="321"/>
        <end position="411"/>
    </location>
</feature>
<feature type="domain" description="Fibronectin type-III 2" evidence="6">
    <location>
        <begin position="416"/>
        <end position="510"/>
    </location>
</feature>
<feature type="domain" description="Fibronectin type-III 3" evidence="6">
    <location>
        <begin position="514"/>
        <end position="604"/>
    </location>
</feature>
<feature type="domain" description="Fibronectin type-III 4" evidence="6">
    <location>
        <begin position="609"/>
        <end position="706"/>
    </location>
</feature>
<feature type="domain" description="Fibronectin type-III 5" evidence="6">
    <location>
        <begin position="711"/>
        <end position="810"/>
    </location>
</feature>
<feature type="domain" description="Fibronectin type-III 6" evidence="6">
    <location>
        <begin position="811"/>
        <end position="905"/>
    </location>
</feature>
<feature type="domain" description="Fibronectin type-III 7" evidence="6">
    <location>
        <begin position="909"/>
        <end position="1001"/>
    </location>
</feature>
<feature type="domain" description="Fibronectin type-III 8" evidence="6">
    <location>
        <begin position="1005"/>
        <end position="1089"/>
    </location>
</feature>
<feature type="domain" description="Tyrosine-protein phosphatase 1" evidence="5">
    <location>
        <begin position="1343"/>
        <end position="1598"/>
    </location>
</feature>
<feature type="domain" description="Tyrosine-protein phosphatase 2" evidence="5">
    <location>
        <begin position="1630"/>
        <end position="1889"/>
    </location>
</feature>
<feature type="region of interest" description="Disordered" evidence="8">
    <location>
        <begin position="399"/>
        <end position="418"/>
    </location>
</feature>
<feature type="region of interest" description="Disordered" evidence="8">
    <location>
        <begin position="693"/>
        <end position="713"/>
    </location>
</feature>
<feature type="active site" description="Phosphocysteine intermediate" evidence="1">
    <location>
        <position position="1539"/>
    </location>
</feature>
<feature type="active site" description="Phosphocysteine intermediate" evidence="1">
    <location>
        <position position="1830"/>
    </location>
</feature>
<feature type="binding site" evidence="1">
    <location>
        <begin position="68"/>
        <end position="77"/>
    </location>
    <ligand>
        <name>heparin</name>
        <dbReference type="ChEBI" id="CHEBI:28304"/>
    </ligand>
</feature>
<feature type="binding site" evidence="1">
    <location>
        <position position="1507"/>
    </location>
    <ligand>
        <name>substrate</name>
    </ligand>
</feature>
<feature type="binding site" evidence="1">
    <location>
        <begin position="1539"/>
        <end position="1545"/>
    </location>
    <ligand>
        <name>substrate</name>
    </ligand>
</feature>
<feature type="binding site" evidence="1">
    <location>
        <position position="1583"/>
    </location>
    <ligand>
        <name>substrate</name>
    </ligand>
</feature>
<feature type="modified residue" description="Phosphoserine" evidence="2">
    <location>
        <position position="1296"/>
    </location>
</feature>
<feature type="glycosylation site" description="N-linked (GlcNAc...) asparagine" evidence="3">
    <location>
        <position position="117"/>
    </location>
</feature>
<feature type="glycosylation site" description="N-linked (GlcNAc...) asparagine" evidence="3">
    <location>
        <position position="250"/>
    </location>
</feature>
<feature type="glycosylation site" description="N-linked (GlcNAc...) asparagine" evidence="3">
    <location>
        <position position="295"/>
    </location>
</feature>
<feature type="glycosylation site" description="N-linked (GlcNAc...) asparagine" evidence="3">
    <location>
        <position position="721"/>
    </location>
</feature>
<feature type="glycosylation site" description="N-linked (GlcNAc...) asparagine" evidence="3">
    <location>
        <position position="941"/>
    </location>
</feature>
<feature type="glycosylation site" description="N-linked (GlcNAc...) asparagine" evidence="3">
    <location>
        <position position="957"/>
    </location>
</feature>
<feature type="disulfide bond" evidence="4">
    <location>
        <begin position="54"/>
        <end position="107"/>
    </location>
</feature>
<feature type="disulfide bond" evidence="4">
    <location>
        <begin position="156"/>
        <end position="207"/>
    </location>
</feature>
<feature type="disulfide bond" evidence="4">
    <location>
        <begin position="253"/>
        <end position="298"/>
    </location>
</feature>
<name>PTPRF_BOVIN</name>
<protein>
    <recommendedName>
        <fullName>Receptor-type tyrosine-protein phosphatase F</fullName>
        <ecNumber>3.1.3.48</ecNumber>
    </recommendedName>
</protein>
<dbReference type="EC" id="3.1.3.48"/>
<dbReference type="EMBL" id="BC151592">
    <property type="protein sequence ID" value="AAI51593.1"/>
    <property type="molecule type" value="mRNA"/>
</dbReference>
<dbReference type="RefSeq" id="NP_001094549.1">
    <property type="nucleotide sequence ID" value="NM_001101079.1"/>
</dbReference>
<dbReference type="SMR" id="A7MBJ4"/>
<dbReference type="FunCoup" id="A7MBJ4">
    <property type="interactions" value="825"/>
</dbReference>
<dbReference type="STRING" id="9913.ENSBTAP00000065652"/>
<dbReference type="GlyCosmos" id="A7MBJ4">
    <property type="glycosylation" value="6 sites, No reported glycans"/>
</dbReference>
<dbReference type="GlyGen" id="A7MBJ4">
    <property type="glycosylation" value="6 sites"/>
</dbReference>
<dbReference type="PaxDb" id="9913-ENSBTAP00000024046"/>
<dbReference type="Ensembl" id="ENSBTAT00000087285.1">
    <property type="protein sequence ID" value="ENSBTAP00000059113.1"/>
    <property type="gene ID" value="ENSBTAG00000000253.7"/>
</dbReference>
<dbReference type="GeneID" id="512072"/>
<dbReference type="KEGG" id="bta:512072"/>
<dbReference type="CTD" id="5792"/>
<dbReference type="VEuPathDB" id="HostDB:ENSBTAG00000000253"/>
<dbReference type="VGNC" id="VGNC:33550">
    <property type="gene designation" value="PTPRF"/>
</dbReference>
<dbReference type="eggNOG" id="KOG4228">
    <property type="taxonomic scope" value="Eukaryota"/>
</dbReference>
<dbReference type="GeneTree" id="ENSGT00940000155060"/>
<dbReference type="HOGENOM" id="CLU_001645_4_0_1"/>
<dbReference type="InParanoid" id="A7MBJ4"/>
<dbReference type="OrthoDB" id="10253954at2759"/>
<dbReference type="TreeFam" id="TF312900"/>
<dbReference type="Reactome" id="R-BTA-388844">
    <property type="pathway name" value="Receptor-type tyrosine-protein phosphatases"/>
</dbReference>
<dbReference type="Reactome" id="R-BTA-77387">
    <property type="pathway name" value="Insulin receptor recycling"/>
</dbReference>
<dbReference type="Reactome" id="R-BTA-8849932">
    <property type="pathway name" value="Synaptic adhesion-like molecules"/>
</dbReference>
<dbReference type="Proteomes" id="UP000009136">
    <property type="component" value="Chromosome 3"/>
</dbReference>
<dbReference type="Bgee" id="ENSBTAG00000000253">
    <property type="expression patterns" value="Expressed in saliva-secreting gland and 105 other cell types or tissues"/>
</dbReference>
<dbReference type="GO" id="GO:0016020">
    <property type="term" value="C:membrane"/>
    <property type="evidence" value="ECO:0007669"/>
    <property type="project" value="UniProtKB-SubCell"/>
</dbReference>
<dbReference type="GO" id="GO:0008201">
    <property type="term" value="F:heparin binding"/>
    <property type="evidence" value="ECO:0007669"/>
    <property type="project" value="UniProtKB-KW"/>
</dbReference>
<dbReference type="GO" id="GO:0004725">
    <property type="term" value="F:protein tyrosine phosphatase activity"/>
    <property type="evidence" value="ECO:0000250"/>
    <property type="project" value="UniProtKB"/>
</dbReference>
<dbReference type="GO" id="GO:0016477">
    <property type="term" value="P:cell migration"/>
    <property type="evidence" value="ECO:0000250"/>
    <property type="project" value="UniProtKB"/>
</dbReference>
<dbReference type="GO" id="GO:1900121">
    <property type="term" value="P:negative regulation of receptor binding"/>
    <property type="evidence" value="ECO:0000250"/>
    <property type="project" value="UniProtKB"/>
</dbReference>
<dbReference type="GO" id="GO:0035335">
    <property type="term" value="P:peptidyl-tyrosine dephosphorylation"/>
    <property type="evidence" value="ECO:0000250"/>
    <property type="project" value="UniProtKB"/>
</dbReference>
<dbReference type="GO" id="GO:0007165">
    <property type="term" value="P:signal transduction"/>
    <property type="evidence" value="ECO:0000318"/>
    <property type="project" value="GO_Central"/>
</dbReference>
<dbReference type="GO" id="GO:0099560">
    <property type="term" value="P:synaptic membrane adhesion"/>
    <property type="evidence" value="ECO:0000318"/>
    <property type="project" value="GO_Central"/>
</dbReference>
<dbReference type="CDD" id="cd00063">
    <property type="entry name" value="FN3"/>
    <property type="match status" value="8"/>
</dbReference>
<dbReference type="CDD" id="cd05738">
    <property type="entry name" value="IgI_2_RPTP_IIa_LAR_like"/>
    <property type="match status" value="1"/>
</dbReference>
<dbReference type="CDD" id="cd05739">
    <property type="entry name" value="IgI_3_RPTP_IIa_LAR_like"/>
    <property type="match status" value="1"/>
</dbReference>
<dbReference type="CDD" id="cd14629">
    <property type="entry name" value="R-PTP-F-2"/>
    <property type="match status" value="1"/>
</dbReference>
<dbReference type="CDD" id="cd14626">
    <property type="entry name" value="R-PTPc-F-1"/>
    <property type="match status" value="1"/>
</dbReference>
<dbReference type="FunFam" id="2.60.40.10:FF:000010">
    <property type="entry name" value="receptor-type tyrosine-protein phosphatase delta isoform X1"/>
    <property type="match status" value="1"/>
</dbReference>
<dbReference type="FunFam" id="2.60.40.10:FF:000027">
    <property type="entry name" value="receptor-type tyrosine-protein phosphatase delta isoform X1"/>
    <property type="match status" value="1"/>
</dbReference>
<dbReference type="FunFam" id="2.60.40.10:FF:000036">
    <property type="entry name" value="receptor-type tyrosine-protein phosphatase delta isoform X1"/>
    <property type="match status" value="1"/>
</dbReference>
<dbReference type="FunFam" id="2.60.40.10:FF:000066">
    <property type="entry name" value="receptor-type tyrosine-protein phosphatase delta isoform X1"/>
    <property type="match status" value="1"/>
</dbReference>
<dbReference type="FunFam" id="2.60.40.10:FF:000144">
    <property type="entry name" value="receptor-type tyrosine-protein phosphatase delta isoform X1"/>
    <property type="match status" value="1"/>
</dbReference>
<dbReference type="FunFam" id="2.60.40.10:FF:000015">
    <property type="entry name" value="receptor-type tyrosine-protein phosphatase delta isoform X2"/>
    <property type="match status" value="1"/>
</dbReference>
<dbReference type="FunFam" id="2.60.40.10:FF:000023">
    <property type="entry name" value="receptor-type tyrosine-protein phosphatase delta isoform X2"/>
    <property type="match status" value="1"/>
</dbReference>
<dbReference type="FunFam" id="2.60.40.10:FF:000082">
    <property type="entry name" value="receptor-type tyrosine-protein phosphatase delta isoform X2"/>
    <property type="match status" value="1"/>
</dbReference>
<dbReference type="FunFam" id="2.60.40.10:FF:000128">
    <property type="entry name" value="receptor-type tyrosine-protein phosphatase delta isoform X2"/>
    <property type="match status" value="1"/>
</dbReference>
<dbReference type="FunFam" id="3.90.190.10:FF:000002">
    <property type="entry name" value="receptor-type tyrosine-protein phosphatase delta isoform X2"/>
    <property type="match status" value="1"/>
</dbReference>
<dbReference type="FunFam" id="3.90.190.10:FF:000001">
    <property type="entry name" value="Receptor-type tyrosine-protein phosphatase F isoform A"/>
    <property type="match status" value="1"/>
</dbReference>
<dbReference type="FunFam" id="2.60.40.10:FF:000098">
    <property type="entry name" value="receptor-type tyrosine-protein phosphatase F isoform X1"/>
    <property type="match status" value="1"/>
</dbReference>
<dbReference type="FunFam" id="2.60.40.10:FF:000353">
    <property type="entry name" value="receptor-type tyrosine-protein phosphatase F isoform X1"/>
    <property type="match status" value="1"/>
</dbReference>
<dbReference type="Gene3D" id="2.60.40.10">
    <property type="entry name" value="Immunoglobulins"/>
    <property type="match status" value="11"/>
</dbReference>
<dbReference type="Gene3D" id="3.90.190.10">
    <property type="entry name" value="Protein tyrosine phosphatase superfamily"/>
    <property type="match status" value="2"/>
</dbReference>
<dbReference type="InterPro" id="IPR003961">
    <property type="entry name" value="FN3_dom"/>
</dbReference>
<dbReference type="InterPro" id="IPR036116">
    <property type="entry name" value="FN3_sf"/>
</dbReference>
<dbReference type="InterPro" id="IPR007110">
    <property type="entry name" value="Ig-like_dom"/>
</dbReference>
<dbReference type="InterPro" id="IPR036179">
    <property type="entry name" value="Ig-like_dom_sf"/>
</dbReference>
<dbReference type="InterPro" id="IPR013783">
    <property type="entry name" value="Ig-like_fold"/>
</dbReference>
<dbReference type="InterPro" id="IPR013098">
    <property type="entry name" value="Ig_I-set"/>
</dbReference>
<dbReference type="InterPro" id="IPR003599">
    <property type="entry name" value="Ig_sub"/>
</dbReference>
<dbReference type="InterPro" id="IPR003598">
    <property type="entry name" value="Ig_sub2"/>
</dbReference>
<dbReference type="InterPro" id="IPR029021">
    <property type="entry name" value="Prot-tyrosine_phosphatase-like"/>
</dbReference>
<dbReference type="InterPro" id="IPR000242">
    <property type="entry name" value="PTP_cat"/>
</dbReference>
<dbReference type="InterPro" id="IPR050713">
    <property type="entry name" value="RTP_Phos/Ushers"/>
</dbReference>
<dbReference type="InterPro" id="IPR016130">
    <property type="entry name" value="Tyr_Pase_AS"/>
</dbReference>
<dbReference type="InterPro" id="IPR003595">
    <property type="entry name" value="Tyr_Pase_cat"/>
</dbReference>
<dbReference type="InterPro" id="IPR000387">
    <property type="entry name" value="Tyr_Pase_dom"/>
</dbReference>
<dbReference type="PANTHER" id="PTHR46957">
    <property type="entry name" value="CYTOKINE RECEPTOR"/>
    <property type="match status" value="1"/>
</dbReference>
<dbReference type="PANTHER" id="PTHR46957:SF9">
    <property type="entry name" value="PROTEIN-TYROSINE-PHOSPHATASE"/>
    <property type="match status" value="1"/>
</dbReference>
<dbReference type="Pfam" id="PF00041">
    <property type="entry name" value="fn3"/>
    <property type="match status" value="7"/>
</dbReference>
<dbReference type="Pfam" id="PF07679">
    <property type="entry name" value="I-set"/>
    <property type="match status" value="3"/>
</dbReference>
<dbReference type="Pfam" id="PF00102">
    <property type="entry name" value="Y_phosphatase"/>
    <property type="match status" value="2"/>
</dbReference>
<dbReference type="PRINTS" id="PR00014">
    <property type="entry name" value="FNTYPEIII"/>
</dbReference>
<dbReference type="PRINTS" id="PR00700">
    <property type="entry name" value="PRTYPHPHTASE"/>
</dbReference>
<dbReference type="SMART" id="SM00060">
    <property type="entry name" value="FN3"/>
    <property type="match status" value="8"/>
</dbReference>
<dbReference type="SMART" id="SM00409">
    <property type="entry name" value="IG"/>
    <property type="match status" value="3"/>
</dbReference>
<dbReference type="SMART" id="SM00408">
    <property type="entry name" value="IGc2"/>
    <property type="match status" value="3"/>
</dbReference>
<dbReference type="SMART" id="SM00194">
    <property type="entry name" value="PTPc"/>
    <property type="match status" value="2"/>
</dbReference>
<dbReference type="SMART" id="SM00404">
    <property type="entry name" value="PTPc_motif"/>
    <property type="match status" value="2"/>
</dbReference>
<dbReference type="SUPFAM" id="SSF52799">
    <property type="entry name" value="(Phosphotyrosine protein) phosphatases II"/>
    <property type="match status" value="2"/>
</dbReference>
<dbReference type="SUPFAM" id="SSF49265">
    <property type="entry name" value="Fibronectin type III"/>
    <property type="match status" value="5"/>
</dbReference>
<dbReference type="SUPFAM" id="SSF48726">
    <property type="entry name" value="Immunoglobulin"/>
    <property type="match status" value="3"/>
</dbReference>
<dbReference type="PROSITE" id="PS50853">
    <property type="entry name" value="FN3"/>
    <property type="match status" value="8"/>
</dbReference>
<dbReference type="PROSITE" id="PS50835">
    <property type="entry name" value="IG_LIKE"/>
    <property type="match status" value="3"/>
</dbReference>
<dbReference type="PROSITE" id="PS00383">
    <property type="entry name" value="TYR_PHOSPHATASE_1"/>
    <property type="match status" value="2"/>
</dbReference>
<dbReference type="PROSITE" id="PS50056">
    <property type="entry name" value="TYR_PHOSPHATASE_2"/>
    <property type="match status" value="2"/>
</dbReference>
<dbReference type="PROSITE" id="PS50055">
    <property type="entry name" value="TYR_PHOSPHATASE_PTP"/>
    <property type="match status" value="2"/>
</dbReference>
<proteinExistence type="evidence at transcript level"/>
<keyword id="KW-0130">Cell adhesion</keyword>
<keyword id="KW-1015">Disulfide bond</keyword>
<keyword id="KW-0325">Glycoprotein</keyword>
<keyword id="KW-0358">Heparin-binding</keyword>
<keyword id="KW-0378">Hydrolase</keyword>
<keyword id="KW-0393">Immunoglobulin domain</keyword>
<keyword id="KW-0472">Membrane</keyword>
<keyword id="KW-0597">Phosphoprotein</keyword>
<keyword id="KW-0904">Protein phosphatase</keyword>
<keyword id="KW-0675">Receptor</keyword>
<keyword id="KW-1185">Reference proteome</keyword>
<keyword id="KW-0677">Repeat</keyword>
<keyword id="KW-0732">Signal</keyword>
<keyword id="KW-0812">Transmembrane</keyword>
<keyword id="KW-1133">Transmembrane helix</keyword>
<accession>A7MBJ4</accession>